<protein>
    <recommendedName>
        <fullName evidence="11">Alpha-(1,3)-fucosyltransferase 7</fullName>
        <ecNumber evidence="5 9 10">2.4.1.-</ecNumber>
    </recommendedName>
    <alternativeName>
        <fullName>Fucosyltransferase 7</fullName>
    </alternativeName>
    <alternativeName>
        <fullName evidence="1">Fucosyltransferase VII</fullName>
        <shortName evidence="1">Fuc-TVII</shortName>
        <shortName>FucT-VII</shortName>
    </alternativeName>
    <alternativeName>
        <fullName>Galactoside 3-L-fucosyltransferase</fullName>
    </alternativeName>
</protein>
<reference key="1">
    <citation type="journal article" date="1996" name="J. Biol. Chem.">
        <title>Expression of the alpha(1,3)fucosyltransferase Fuc-TVII in lymphoid aggregate high endothelial venules correlates with expression of L-selectin ligands.</title>
        <authorList>
            <person name="Smith P.L."/>
            <person name="Gersten K.M."/>
            <person name="Petryniak B."/>
            <person name="Kelly R.J."/>
            <person name="Rogers C."/>
            <person name="Natsuka Y."/>
            <person name="Alford J.A. III"/>
            <person name="Scheidegger E.P."/>
            <person name="Natsuka S."/>
            <person name="Lowe J.B."/>
        </authorList>
    </citation>
    <scope>NUCLEOTIDE SEQUENCE [GENOMIC DNA] (ISOFORMS 1 AND 2)</scope>
    <scope>TISSUE SPECIFICITY</scope>
    <scope>CATALYTIC ACTIVITY</scope>
    <scope>FUNCTION</scope>
    <source>
        <strain>NIH Swiss</strain>
    </source>
</reference>
<reference key="2">
    <citation type="journal article" date="2004" name="Genome Res.">
        <title>The status, quality, and expansion of the NIH full-length cDNA project: the Mammalian Gene Collection (MGC).</title>
        <authorList>
            <consortium name="The MGC Project Team"/>
        </authorList>
    </citation>
    <scope>NUCLEOTIDE SEQUENCE [LARGE SCALE MRNA] (ISOFORM 1)</scope>
</reference>
<reference key="3">
    <citation type="journal article" date="1996" name="Cell">
        <title>The alpha(1,3)fucosyltransferase Fuc-TVII controls leukocyte trafficking through an essential role in L-, E-, and P-selectin ligand biosynthesis.</title>
        <authorList>
            <person name="Maly P."/>
            <person name="Thall A."/>
            <person name="Petryniak B."/>
            <person name="Rogers C.E."/>
            <person name="Smith P.L."/>
            <person name="Marks R.M."/>
            <person name="Kelly R.J."/>
            <person name="Gersten K.M."/>
            <person name="Cheng G."/>
            <person name="Saunders T.L."/>
            <person name="Camper S.A."/>
            <person name="Camphausen R.T."/>
            <person name="Sullivan F.X."/>
            <person name="Isogai Y."/>
            <person name="Hindsgaul O."/>
            <person name="von Andrian U.H."/>
            <person name="Lowe J.B."/>
        </authorList>
    </citation>
    <scope>FUNCTION</scope>
    <scope>CATALYTIC ACTIVITY</scope>
</reference>
<reference key="4">
    <citation type="journal article" date="2000" name="Immunity">
        <title>Specialized contributions by alpha(1,3)-fucosyltransferase-IV and FucT-VII during leukocyte rolling in dermal microvessels.</title>
        <authorList>
            <person name="Weninger W."/>
            <person name="Ulfman L.H."/>
            <person name="Cheng G."/>
            <person name="Souchkova N."/>
            <person name="Quackenbush E.J."/>
            <person name="Lowe J.B."/>
            <person name="von Andrian U.H."/>
        </authorList>
    </citation>
    <scope>FUNCTION</scope>
</reference>
<reference key="5">
    <citation type="journal article" date="2000" name="J. Biol. Chem.">
        <title>P-selectin glycoprotein ligand-1 and E-selectin ligand-1 are differentially modified by fucosyltransferases Fuc-TIV and Fuc-TVII in mouse neutrophils.</title>
        <authorList>
            <person name="Huang M.C."/>
            <person name="Zoellner O."/>
            <person name="Moll T."/>
            <person name="Maly P."/>
            <person name="Thall A.D."/>
            <person name="Lowe J.B."/>
            <person name="Vestweber D."/>
        </authorList>
    </citation>
    <scope>FUNCTION</scope>
</reference>
<reference key="6">
    <citation type="journal article" date="2001" name="Immunity">
        <title>The alpha(1,3)fucosyltransferases FucT-IV and FucT-VII exert collaborative control over selectin-dependent leukocyte recruitment and lymphocyte homing.</title>
        <authorList>
            <person name="Homeister J.W."/>
            <person name="Thall A.D."/>
            <person name="Petryniak B."/>
            <person name="Maly P."/>
            <person name="Rogers C.E."/>
            <person name="Smith P.L."/>
            <person name="Kelly R.J."/>
            <person name="Gersten K.M."/>
            <person name="Askari S.W."/>
            <person name="Cheng G."/>
            <person name="Smithson G."/>
            <person name="Marks R.M."/>
            <person name="Misra A.K."/>
            <person name="Hindsgaul O."/>
            <person name="von Andrian U.H."/>
            <person name="Lowe J.B."/>
        </authorList>
    </citation>
    <scope>FUNCTION</scope>
    <scope>CATALYTIC ACTIVITY</scope>
    <scope>PATHWAY</scope>
</reference>
<reference key="7">
    <citation type="journal article" date="2001" name="J. Exp. Med.">
        <title>Fuc-TVII is required for T helper 1 and T cytotoxic 1 lymphocyte selectin ligand expression and recruitment in inflammation, and together with Fuc-TIV regulates naive T cell trafficking to lymph nodes.</title>
        <authorList>
            <person name="Smithson G."/>
            <person name="Rogers C.E."/>
            <person name="Smith P.L."/>
            <person name="Scheidegger E.P."/>
            <person name="Petryniak B."/>
            <person name="Myers J.T."/>
            <person name="Kim D.S."/>
            <person name="Homeister J.W."/>
            <person name="Lowe J.B."/>
        </authorList>
    </citation>
    <scope>FUNCTION</scope>
</reference>
<reference key="8">
    <citation type="journal article" date="2002" name="J. Biol. Chem.">
        <title>The alpha (1,3)-fucosyltransferase Fuc-TIV, but not Fuc-TVII, generates sialyl Lewis X-like epitopes preferentially on glycolipids.</title>
        <authorList>
            <person name="Huang M.C."/>
            <person name="Laskowska A."/>
            <person name="Vestweber D."/>
            <person name="Wild M.K."/>
        </authorList>
    </citation>
    <scope>FUNCTION</scope>
</reference>
<reference key="9">
    <citation type="journal article" date="2005" name="J. Immunol.">
        <title>Efficient recruitment of lymphocytes in inflamed brain venules requires expression of cutaneous lymphocyte antigen and fucosyltransferase-VII.</title>
        <authorList>
            <person name="Piccio L."/>
            <person name="Rossi B."/>
            <person name="Colantonio L."/>
            <person name="Grenningloh R."/>
            <person name="Gho A."/>
            <person name="Ottoboni L."/>
            <person name="Homeister J.W."/>
            <person name="Scarpini E."/>
            <person name="Martinello M."/>
            <person name="Laudanna C."/>
            <person name="D'Ambrosio D."/>
            <person name="Lowe J.B."/>
            <person name="Constantin G."/>
        </authorList>
    </citation>
    <scope>FUNCTION</scope>
</reference>
<organism>
    <name type="scientific">Mus musculus</name>
    <name type="common">Mouse</name>
    <dbReference type="NCBI Taxonomy" id="10090"/>
    <lineage>
        <taxon>Eukaryota</taxon>
        <taxon>Metazoa</taxon>
        <taxon>Chordata</taxon>
        <taxon>Craniata</taxon>
        <taxon>Vertebrata</taxon>
        <taxon>Euteleostomi</taxon>
        <taxon>Mammalia</taxon>
        <taxon>Eutheria</taxon>
        <taxon>Euarchontoglires</taxon>
        <taxon>Glires</taxon>
        <taxon>Rodentia</taxon>
        <taxon>Myomorpha</taxon>
        <taxon>Muroidea</taxon>
        <taxon>Muridae</taxon>
        <taxon>Murinae</taxon>
        <taxon>Mus</taxon>
        <taxon>Mus</taxon>
    </lineage>
</organism>
<gene>
    <name evidence="15" type="primary">Fut7</name>
</gene>
<dbReference type="EC" id="2.4.1.-" evidence="5 9 10"/>
<dbReference type="EMBL" id="U45980">
    <property type="protein sequence ID" value="AAC52484.1"/>
    <property type="molecule type" value="Genomic_DNA"/>
</dbReference>
<dbReference type="EMBL" id="U45980">
    <property type="protein sequence ID" value="AAC52485.1"/>
    <property type="molecule type" value="Genomic_DNA"/>
</dbReference>
<dbReference type="EMBL" id="BC105670">
    <property type="protein sequence ID" value="AAI05671.1"/>
    <property type="molecule type" value="mRNA"/>
</dbReference>
<dbReference type="CCDS" id="CCDS15772.1">
    <molecule id="Q11131-2"/>
</dbReference>
<dbReference type="CCDS" id="CCDS50530.1">
    <molecule id="Q11131-1"/>
</dbReference>
<dbReference type="RefSeq" id="NP_001170837.1">
    <molecule id="Q11131-1"/>
    <property type="nucleotide sequence ID" value="NM_001177366.1"/>
</dbReference>
<dbReference type="RefSeq" id="NP_001170838.1">
    <molecule id="Q11131-2"/>
    <property type="nucleotide sequence ID" value="NM_001177367.1"/>
</dbReference>
<dbReference type="RefSeq" id="NP_001276382.1">
    <molecule id="Q11131-2"/>
    <property type="nucleotide sequence ID" value="NM_001289453.1"/>
</dbReference>
<dbReference type="RefSeq" id="NP_001276383.1">
    <molecule id="Q11131-2"/>
    <property type="nucleotide sequence ID" value="NM_001289454.1"/>
</dbReference>
<dbReference type="RefSeq" id="NP_001276384.1">
    <molecule id="Q11131-2"/>
    <property type="nucleotide sequence ID" value="NM_001289455.1"/>
</dbReference>
<dbReference type="RefSeq" id="NP_001276385.1">
    <molecule id="Q11131-2"/>
    <property type="nucleotide sequence ID" value="NM_001289456.1"/>
</dbReference>
<dbReference type="RefSeq" id="NP_038552.1">
    <molecule id="Q11131-2"/>
    <property type="nucleotide sequence ID" value="NM_013524.3"/>
</dbReference>
<dbReference type="RefSeq" id="XP_006497767.1">
    <molecule id="Q11131-1"/>
    <property type="nucleotide sequence ID" value="XM_006497704.1"/>
</dbReference>
<dbReference type="SMR" id="Q11131"/>
<dbReference type="FunCoup" id="Q11131">
    <property type="interactions" value="504"/>
</dbReference>
<dbReference type="STRING" id="10090.ENSMUSP00000097895"/>
<dbReference type="CAZy" id="GT10">
    <property type="family name" value="Glycosyltransferase Family 10"/>
</dbReference>
<dbReference type="GlyCosmos" id="Q11131">
    <property type="glycosylation" value="2 sites, No reported glycans"/>
</dbReference>
<dbReference type="GlyGen" id="Q11131">
    <property type="glycosylation" value="3 sites"/>
</dbReference>
<dbReference type="iPTMnet" id="Q11131"/>
<dbReference type="PhosphoSitePlus" id="Q11131"/>
<dbReference type="PaxDb" id="10090-ENSMUSP00000109917"/>
<dbReference type="ProteomicsDB" id="271651">
    <molecule id="Q11131-1"/>
</dbReference>
<dbReference type="ProteomicsDB" id="271652">
    <molecule id="Q11131-2"/>
</dbReference>
<dbReference type="Antibodypedia" id="32341">
    <property type="antibodies" value="152 antibodies from 26 providers"/>
</dbReference>
<dbReference type="DNASU" id="14347"/>
<dbReference type="Ensembl" id="ENSMUST00000041654.6">
    <molecule id="Q11131-2"/>
    <property type="protein sequence ID" value="ENSMUSP00000039985.6"/>
    <property type="gene ID" value="ENSMUSG00000036587.14"/>
</dbReference>
<dbReference type="Ensembl" id="ENSMUST00000100320.5">
    <molecule id="Q11131-1"/>
    <property type="protein sequence ID" value="ENSMUSP00000097895.5"/>
    <property type="gene ID" value="ENSMUSG00000036587.14"/>
</dbReference>
<dbReference type="Ensembl" id="ENSMUST00000114278.9">
    <molecule id="Q11131-2"/>
    <property type="protein sequence ID" value="ENSMUSP00000109917.3"/>
    <property type="gene ID" value="ENSMUSG00000036587.14"/>
</dbReference>
<dbReference type="GeneID" id="14347"/>
<dbReference type="KEGG" id="mmu:14347"/>
<dbReference type="UCSC" id="uc012bry.1">
    <molecule id="Q11131-1"/>
    <property type="organism name" value="mouse"/>
</dbReference>
<dbReference type="AGR" id="MGI:107692"/>
<dbReference type="CTD" id="2529"/>
<dbReference type="MGI" id="MGI:107692">
    <property type="gene designation" value="Fut7"/>
</dbReference>
<dbReference type="VEuPathDB" id="HostDB:ENSMUSG00000036587"/>
<dbReference type="eggNOG" id="KOG2619">
    <property type="taxonomic scope" value="Eukaryota"/>
</dbReference>
<dbReference type="GeneTree" id="ENSGT00940000161618"/>
<dbReference type="HOGENOM" id="CLU_032075_4_1_1"/>
<dbReference type="InParanoid" id="Q11131"/>
<dbReference type="OMA" id="PGQPWVW"/>
<dbReference type="OrthoDB" id="427096at2759"/>
<dbReference type="PhylomeDB" id="Q11131"/>
<dbReference type="TreeFam" id="TF316348"/>
<dbReference type="BRENDA" id="2.4.1.152">
    <property type="organism ID" value="3474"/>
</dbReference>
<dbReference type="Reactome" id="R-MMU-9037629">
    <property type="pathway name" value="Lewis blood group biosynthesis"/>
</dbReference>
<dbReference type="UniPathway" id="UPA00378"/>
<dbReference type="BioGRID-ORCS" id="14347">
    <property type="hits" value="2 hits in 79 CRISPR screens"/>
</dbReference>
<dbReference type="PRO" id="PR:Q11131"/>
<dbReference type="Proteomes" id="UP000000589">
    <property type="component" value="Chromosome 2"/>
</dbReference>
<dbReference type="RNAct" id="Q11131">
    <property type="molecule type" value="protein"/>
</dbReference>
<dbReference type="Bgee" id="ENSMUSG00000036587">
    <property type="expression patterns" value="Expressed in granulocyte and 26 other cell types or tissues"/>
</dbReference>
<dbReference type="ExpressionAtlas" id="Q11131">
    <property type="expression patterns" value="baseline and differential"/>
</dbReference>
<dbReference type="GO" id="GO:0032580">
    <property type="term" value="C:Golgi cisterna membrane"/>
    <property type="evidence" value="ECO:0007669"/>
    <property type="project" value="UniProtKB-SubCell"/>
</dbReference>
<dbReference type="GO" id="GO:0005802">
    <property type="term" value="C:trans-Golgi network"/>
    <property type="evidence" value="ECO:0007669"/>
    <property type="project" value="Ensembl"/>
</dbReference>
<dbReference type="GO" id="GO:0017083">
    <property type="term" value="F:4-galactosyl-N-acetylglucosaminide 3-alpha-L-fucosyltransferase activity"/>
    <property type="evidence" value="ECO:0000250"/>
    <property type="project" value="UniProtKB"/>
</dbReference>
<dbReference type="GO" id="GO:0046920">
    <property type="term" value="F:alpha-(1-&gt;3)-fucosyltransferase activity"/>
    <property type="evidence" value="ECO:0000314"/>
    <property type="project" value="UniProtKB"/>
</dbReference>
<dbReference type="GO" id="GO:0008417">
    <property type="term" value="F:fucosyltransferase activity"/>
    <property type="evidence" value="ECO:0000250"/>
    <property type="project" value="UniProtKB"/>
</dbReference>
<dbReference type="GO" id="GO:0002361">
    <property type="term" value="P:CD4-positive, CD25-positive, alpha-beta regulatory T cell differentiation"/>
    <property type="evidence" value="ECO:0000315"/>
    <property type="project" value="MGI"/>
</dbReference>
<dbReference type="GO" id="GO:0006672">
    <property type="term" value="P:ceramide metabolic process"/>
    <property type="evidence" value="ECO:0007669"/>
    <property type="project" value="Ensembl"/>
</dbReference>
<dbReference type="GO" id="GO:0007566">
    <property type="term" value="P:embryo implantation"/>
    <property type="evidence" value="ECO:0000250"/>
    <property type="project" value="UniProtKB"/>
</dbReference>
<dbReference type="GO" id="GO:0006954">
    <property type="term" value="P:inflammatory response"/>
    <property type="evidence" value="ECO:0000250"/>
    <property type="project" value="UniProtKB"/>
</dbReference>
<dbReference type="GO" id="GO:0002522">
    <property type="term" value="P:leukocyte migration involved in immune response"/>
    <property type="evidence" value="ECO:0000315"/>
    <property type="project" value="MGI"/>
</dbReference>
<dbReference type="GO" id="GO:0002523">
    <property type="term" value="P:leukocyte migration involved in inflammatory response"/>
    <property type="evidence" value="ECO:0000315"/>
    <property type="project" value="UniProtKB"/>
</dbReference>
<dbReference type="GO" id="GO:0097022">
    <property type="term" value="P:lymphocyte migration into lymph node"/>
    <property type="evidence" value="ECO:0000315"/>
    <property type="project" value="UniProtKB"/>
</dbReference>
<dbReference type="GO" id="GO:0097021">
    <property type="term" value="P:lymphocyte migration into lymphoid organs"/>
    <property type="evidence" value="ECO:0000315"/>
    <property type="project" value="UniProtKB"/>
</dbReference>
<dbReference type="GO" id="GO:0045785">
    <property type="term" value="P:positive regulation of cell adhesion"/>
    <property type="evidence" value="ECO:0000250"/>
    <property type="project" value="UniProtKB"/>
</dbReference>
<dbReference type="GO" id="GO:0022409">
    <property type="term" value="P:positive regulation of cell-cell adhesion"/>
    <property type="evidence" value="ECO:0000250"/>
    <property type="project" value="UniProtKB"/>
</dbReference>
<dbReference type="GO" id="GO:1904996">
    <property type="term" value="P:positive regulation of leukocyte adhesion to vascular endothelial cell"/>
    <property type="evidence" value="ECO:0000250"/>
    <property type="project" value="UniProtKB"/>
</dbReference>
<dbReference type="GO" id="GO:1903238">
    <property type="term" value="P:positive regulation of leukocyte tethering or rolling"/>
    <property type="evidence" value="ECO:0000315"/>
    <property type="project" value="UniProtKB"/>
</dbReference>
<dbReference type="GO" id="GO:1902624">
    <property type="term" value="P:positive regulation of neutrophil migration"/>
    <property type="evidence" value="ECO:0000315"/>
    <property type="project" value="UniProtKB"/>
</dbReference>
<dbReference type="GO" id="GO:0006486">
    <property type="term" value="P:protein glycosylation"/>
    <property type="evidence" value="ECO:0000250"/>
    <property type="project" value="UniProtKB"/>
</dbReference>
<dbReference type="GO" id="GO:0060353">
    <property type="term" value="P:regulation of cell adhesion molecule production"/>
    <property type="evidence" value="ECO:0007669"/>
    <property type="project" value="Ensembl"/>
</dbReference>
<dbReference type="GO" id="GO:0022407">
    <property type="term" value="P:regulation of cell-cell adhesion"/>
    <property type="evidence" value="ECO:0000250"/>
    <property type="project" value="UniProtKB"/>
</dbReference>
<dbReference type="GO" id="GO:0046626">
    <property type="term" value="P:regulation of insulin receptor signaling pathway"/>
    <property type="evidence" value="ECO:0000250"/>
    <property type="project" value="UniProtKB"/>
</dbReference>
<dbReference type="GO" id="GO:1904994">
    <property type="term" value="P:regulation of leukocyte adhesion to vascular endothelial cell"/>
    <property type="evidence" value="ECO:0000315"/>
    <property type="project" value="UniProtKB"/>
</dbReference>
<dbReference type="GO" id="GO:2000389">
    <property type="term" value="P:regulation of neutrophil extravasation"/>
    <property type="evidence" value="ECO:0000315"/>
    <property type="project" value="UniProtKB"/>
</dbReference>
<dbReference type="GO" id="GO:0001807">
    <property type="term" value="P:regulation of type IV hypersensitivity"/>
    <property type="evidence" value="ECO:0000315"/>
    <property type="project" value="UniProtKB"/>
</dbReference>
<dbReference type="GO" id="GO:0072678">
    <property type="term" value="P:T cell migration"/>
    <property type="evidence" value="ECO:0000315"/>
    <property type="project" value="MGI"/>
</dbReference>
<dbReference type="FunFam" id="3.40.50.11660:FF:000001">
    <property type="entry name" value="alpha-(1,3)-fucosyltransferase 9"/>
    <property type="match status" value="1"/>
</dbReference>
<dbReference type="Gene3D" id="3.40.50.11660">
    <property type="entry name" value="Glycosyl transferase family 10, C-terminal domain"/>
    <property type="match status" value="1"/>
</dbReference>
<dbReference type="InterPro" id="IPR055270">
    <property type="entry name" value="Glyco_tran_10_C"/>
</dbReference>
<dbReference type="InterPro" id="IPR031481">
    <property type="entry name" value="Glyco_tran_10_N"/>
</dbReference>
<dbReference type="InterPro" id="IPR001503">
    <property type="entry name" value="Glyco_trans_10"/>
</dbReference>
<dbReference type="InterPro" id="IPR038577">
    <property type="entry name" value="GT10-like_C_sf"/>
</dbReference>
<dbReference type="PANTHER" id="PTHR11929">
    <property type="entry name" value="ALPHA- 1,3 -FUCOSYLTRANSFERASE"/>
    <property type="match status" value="1"/>
</dbReference>
<dbReference type="PANTHER" id="PTHR11929:SF12">
    <property type="entry name" value="ALPHA-(1,3)-FUCOSYLTRANSFERASE 7"/>
    <property type="match status" value="1"/>
</dbReference>
<dbReference type="Pfam" id="PF17039">
    <property type="entry name" value="Glyco_tran_10_N"/>
    <property type="match status" value="1"/>
</dbReference>
<dbReference type="Pfam" id="PF00852">
    <property type="entry name" value="Glyco_transf_10"/>
    <property type="match status" value="1"/>
</dbReference>
<dbReference type="SUPFAM" id="SSF53756">
    <property type="entry name" value="UDP-Glycosyltransferase/glycogen phosphorylase"/>
    <property type="match status" value="1"/>
</dbReference>
<evidence type="ECO:0000250" key="1">
    <source>
        <dbReference type="UniProtKB" id="Q11130"/>
    </source>
</evidence>
<evidence type="ECO:0000255" key="2"/>
<evidence type="ECO:0000269" key="3">
    <source>
    </source>
</evidence>
<evidence type="ECO:0000269" key="4">
    <source>
    </source>
</evidence>
<evidence type="ECO:0000269" key="5">
    <source>
    </source>
</evidence>
<evidence type="ECO:0000269" key="6">
    <source>
    </source>
</evidence>
<evidence type="ECO:0000269" key="7">
    <source>
    </source>
</evidence>
<evidence type="ECO:0000269" key="8">
    <source>
    </source>
</evidence>
<evidence type="ECO:0000269" key="9">
    <source>
    </source>
</evidence>
<evidence type="ECO:0000269" key="10">
    <source>
    </source>
</evidence>
<evidence type="ECO:0000305" key="11"/>
<evidence type="ECO:0000305" key="12">
    <source>
    </source>
</evidence>
<evidence type="ECO:0000305" key="13">
    <source>
    </source>
</evidence>
<evidence type="ECO:0000305" key="14">
    <source>
    </source>
</evidence>
<evidence type="ECO:0000312" key="15">
    <source>
        <dbReference type="MGI" id="MGI:107692"/>
    </source>
</evidence>
<name>FUT7_MOUSE</name>
<accession>Q11131</accession>
<accession>Q0VGH5</accession>
<feature type="chain" id="PRO_0000221114" description="Alpha-(1,3)-fucosyltransferase 7">
    <location>
        <begin position="1"/>
        <end position="389"/>
    </location>
</feature>
<feature type="topological domain" description="Cytoplasmic" evidence="2">
    <location>
        <begin position="1"/>
        <end position="55"/>
    </location>
</feature>
<feature type="transmembrane region" description="Helical; Signal-anchor for type II membrane protein" evidence="2">
    <location>
        <begin position="56"/>
        <end position="78"/>
    </location>
</feature>
<feature type="topological domain" description="Lumenal" evidence="2">
    <location>
        <begin position="79"/>
        <end position="389"/>
    </location>
</feature>
<feature type="glycosylation site" description="N-linked (GlcNAc...) asparagine" evidence="2">
    <location>
        <position position="128"/>
    </location>
</feature>
<feature type="glycosylation site" description="N-linked (GlcNAc...) asparagine" evidence="2">
    <location>
        <position position="338"/>
    </location>
</feature>
<feature type="disulfide bond" evidence="1">
    <location>
        <begin position="115"/>
        <end position="123"/>
    </location>
</feature>
<feature type="disulfide bond" evidence="1">
    <location>
        <begin position="258"/>
        <end position="261"/>
    </location>
</feature>
<feature type="disulfide bond" evidence="1">
    <location>
        <begin position="365"/>
        <end position="368"/>
    </location>
</feature>
<feature type="splice variant" id="VSP_001781" description="In isoform 2." evidence="11">
    <original>MPTPCPPACLSTPGTHRLLPFPDWKAPSWESRKEATCNSSSPGPWAEPTVQ</original>
    <variation>MNCI</variation>
    <location>
        <begin position="1"/>
        <end position="51"/>
    </location>
</feature>
<sequence>MPTPCPPACLSTPGTHRLLPFPDWKAPSWESRKEATCNSSSPGPWAEPTVQGYHPTRRLRAWGGLAGGATFMVIWFFWLWGSAPGSAPVPQSTLTILIWHWPFTNRPPELPGDTCTRYGMASCRLSANRSLLASADAVVFHHRELQTRQSLLPLDQRPHGQPWVWASMESPSNTHGLHRFRGIFNWVLSYRRDSDIFVPYGRLEPLSGPTSPLPAKSRMAAWVISNFQERQQRAKLYRQLAPHLQVDVFGRASGRPLCANCLLPTLARYRFYLAFENSQHRDYITEKFWRNALAAGAVPVALGPPRATYEAFVPPDAFVHVDDFSSARELAVFLVSMNESRYRGFFAWRDRLRVRLLGDWRERFCTICARYPYLPRSQVYEDLESWFQA</sequence>
<keyword id="KW-0025">Alternative splicing</keyword>
<keyword id="KW-1015">Disulfide bond</keyword>
<keyword id="KW-0325">Glycoprotein</keyword>
<keyword id="KW-0328">Glycosyltransferase</keyword>
<keyword id="KW-0333">Golgi apparatus</keyword>
<keyword id="KW-0472">Membrane</keyword>
<keyword id="KW-1185">Reference proteome</keyword>
<keyword id="KW-0735">Signal-anchor</keyword>
<keyword id="KW-0808">Transferase</keyword>
<keyword id="KW-0812">Transmembrane</keyword>
<keyword id="KW-1133">Transmembrane helix</keyword>
<proteinExistence type="evidence at protein level"/>
<comment type="function">
    <text evidence="1 3 4 6 7 8 9 10">Catalyzes the transfer of L-fucose, from a guanosine diphosphate-beta-L-fucose, to the N-acetyl glucosamine (GlcNAc) of a distal alpha2,3 sialylated lactosamine unit of a glycoprotein or a glycolipid-linked sialopolylactosamines chain through an alpha-1,3 glycosidic linkage and participates in the final fucosylation step in the biosynthesis of the sialyl Lewis X (sLe(x)), a carbohydrate involved in cell and matrix adhesion during leukocyte trafficking and fertilization (PubMed:10882744, PubMed:11485743, PubMed:11535629, PubMed:12359718, PubMed:15843584, PubMed:8626519, PubMed:8752218). In vitro, also synthesizes sialyl-dimeric-Lex structures, from VIM-2 structures and both di-fucosylated and trifucosylated structures from mono-fucosylated precursors (By similarity). However does not catalyze alpha 1-3 fucosylation when an internal alpha 1-3 fucosylation is present in polylactosamine chain and the fucosylation rate of the internal GlcNAc residues is reduced once fucose has been added to the distal GlcNAc (By similarity). Also catalyzes the transfer of a fucose from GDP-beta-fucose to the 6-sulfated a(2,3)sialylated substrate to produce 6-sulfo sLex mediating significant L-selectin-dependent cell adhesion (PubMed:10894166, PubMed:8752218). Through sialyl-Lewis(x) biosynthesis, can control SELE- and SELP-mediated cell adhesion with leukocytes and allows leukocytes tethering and rolling along the endothelial tissue thereby enabling the leukocytes to accumulate at a site of inflammation (PubMed:10882744, PubMed:11535629, PubMed:15843584, PubMed:8752218). May enhance embryo implantation through sialyl Lewis X (sLeX)-mediated adhesion of embryo cells to endometrium (By similarity). May affect insulin signaling by up-regulating the phosphorylation and expression of some signaling molecules involved in the insulin-signaling pathway through SLe(x) which is present on the glycans of the INSRR alpha subunit (By similarity).</text>
</comment>
<comment type="catalytic activity">
    <reaction evidence="5 9 10">
        <text>an N-acetyl-alpha-neuraminyl-(2-&gt;3)-beta-D-galactosyl-(1-&gt;4)-N-acetyl-beta-D-glucosaminyl derivative + GDP-beta-L-fucose = an alpha-Neu5Ac-(2-&gt;3)-beta-D-Gal-(1-&gt;4)-[alpha-L-Fuc-(1-&gt;3)]-beta-D-GlcNAc derivative + GDP + H(+)</text>
        <dbReference type="Rhea" id="RHEA:56076"/>
        <dbReference type="ChEBI" id="CHEBI:15378"/>
        <dbReference type="ChEBI" id="CHEBI:57273"/>
        <dbReference type="ChEBI" id="CHEBI:58189"/>
        <dbReference type="ChEBI" id="CHEBI:136545"/>
        <dbReference type="ChEBI" id="CHEBI:139509"/>
    </reaction>
    <physiologicalReaction direction="left-to-right" evidence="12 13 14">
        <dbReference type="Rhea" id="RHEA:56077"/>
    </physiologicalReaction>
</comment>
<comment type="catalytic activity">
    <reaction evidence="5 10">
        <text>an alpha-Neu5Ac-(2-&gt;3)-beta-D-Gal-(1-&gt;4)-beta-D-GlcNAc6S derivative + GDP-beta-L-fucose = an alpha-Neu5Ac-(2-&gt;3)-beta-D-Gal-(1-&gt;4)-[alpha-L-Fuc-(1-&gt;3)]-beta-D-GlcNAc6S derivative + GDP + H(+)</text>
        <dbReference type="Rhea" id="RHEA:62004"/>
        <dbReference type="ChEBI" id="CHEBI:15378"/>
        <dbReference type="ChEBI" id="CHEBI:57273"/>
        <dbReference type="ChEBI" id="CHEBI:58189"/>
        <dbReference type="ChEBI" id="CHEBI:145344"/>
        <dbReference type="ChEBI" id="CHEBI:145345"/>
    </reaction>
    <physiologicalReaction direction="left-to-right" evidence="12 14">
        <dbReference type="Rhea" id="RHEA:62005"/>
    </physiologicalReaction>
</comment>
<comment type="catalytic activity">
    <reaction evidence="1">
        <text>a neolactoside IV(3)-alpha-NeuAc-nLc4Cer + GDP-beta-L-fucose = a neolactoside IV(3)-alpha-NeuNAc,III(3)-alpha-Fuc-nLc4Cer + GDP + H(+)</text>
        <dbReference type="Rhea" id="RHEA:48392"/>
        <dbReference type="ChEBI" id="CHEBI:15378"/>
        <dbReference type="ChEBI" id="CHEBI:57273"/>
        <dbReference type="ChEBI" id="CHEBI:58189"/>
        <dbReference type="ChEBI" id="CHEBI:90390"/>
        <dbReference type="ChEBI" id="CHEBI:90392"/>
    </reaction>
    <physiologicalReaction direction="left-to-right" evidence="1">
        <dbReference type="Rhea" id="RHEA:48393"/>
    </physiologicalReaction>
</comment>
<comment type="catalytic activity">
    <reaction evidence="1">
        <text>a neolactoside VI(3)-alpha-NeuNAc-nLc6Cer + GDP-beta-L-fucose = a neolactoside VI(3)-alpha-NeuAc,V(3)-alphaFuc-nLc6Cer + GDP + H(+)</text>
        <dbReference type="Rhea" id="RHEA:48356"/>
        <dbReference type="ChEBI" id="CHEBI:15378"/>
        <dbReference type="ChEBI" id="CHEBI:57273"/>
        <dbReference type="ChEBI" id="CHEBI:58189"/>
        <dbReference type="ChEBI" id="CHEBI:90336"/>
        <dbReference type="ChEBI" id="CHEBI:90339"/>
    </reaction>
    <physiologicalReaction direction="left-to-right" evidence="1">
        <dbReference type="Rhea" id="RHEA:48357"/>
    </physiologicalReaction>
</comment>
<comment type="catalytic activity">
    <reaction evidence="1">
        <text>an alpha-Neu5Ac-(2-&gt;3)-beta-D-Gal-(1-&gt;4)-beta-D-GlcNAc-(1-&gt;3)-beta-D-Gal-(1-&gt;4)-[alpha-L-Fuc-(1-&gt;3)]-beta-D-GlcNAc derivative + GDP-beta-L-fucose = an alpha-Neu5Ac-(2-&gt;3)-beta-D-Gal-(1-&gt;4)-[alpha-L-Fuc-(1-&gt;3)]-beta-D-GlcNAc-(1-&gt;3)-beta-D-Gal-(1-&gt;4)-[alpha-L-Fuc-(1-&gt;3)]-beta-D-GlcNAc derivative + GDP + H(+)</text>
        <dbReference type="Rhea" id="RHEA:52864"/>
        <dbReference type="ChEBI" id="CHEBI:15378"/>
        <dbReference type="ChEBI" id="CHEBI:57273"/>
        <dbReference type="ChEBI" id="CHEBI:58189"/>
        <dbReference type="ChEBI" id="CHEBI:145342"/>
        <dbReference type="ChEBI" id="CHEBI:145343"/>
    </reaction>
    <physiologicalReaction direction="left-to-right" evidence="1">
        <dbReference type="Rhea" id="RHEA:52865"/>
    </physiologicalReaction>
</comment>
<comment type="catalytic activity">
    <reaction evidence="1">
        <text>alpha-Neu5Ac-(2-&gt;3)-beta-D-Gal-(1-&gt;4)-beta-D-GlcNAc-(1-&gt;3)-beta-D-Gal-(1-&gt;4)-D-Glc + GDP-beta-L-fucose = alpha-Neu5Ac-(2-&gt;3)-beta-D-Gal-(1-&gt;4)-[alpha-L-Fuc-(1-&gt;3)]-beta-D-GlcNAc-(1-&gt;3)-beta-D-Gal-(1-&gt;4)-D-Glc + GDP + H(+)</text>
        <dbReference type="Rhea" id="RHEA:62008"/>
        <dbReference type="ChEBI" id="CHEBI:15378"/>
        <dbReference type="ChEBI" id="CHEBI:57273"/>
        <dbReference type="ChEBI" id="CHEBI:58189"/>
        <dbReference type="ChEBI" id="CHEBI:145346"/>
        <dbReference type="ChEBI" id="CHEBI:145347"/>
    </reaction>
    <physiologicalReaction direction="left-to-right" evidence="1">
        <dbReference type="Rhea" id="RHEA:62009"/>
    </physiologicalReaction>
</comment>
<comment type="catalytic activity">
    <reaction evidence="1">
        <text>alpha-Neu5Ac-(2-&gt;3)-beta-D-Gal-(1-&gt;4)-beta-D-GlcNAc-(1-&gt;3)-beta-D-Gal-(1-&gt;4)-[alpha-L-Fuc-(1-&gt;3)]-beta-D-GlcNAc-(1-&gt;3)-beta-D-Gal-(1-&gt;4)-beta-D-GlcNAc + GDP-beta-L-fucose = alpha-Neu5Ac-(2-&gt;3)-beta-D-Gal-(1-&gt;4)-[alpha-L-Fuc-(1-&gt;3)]-beta-D-GlcNAc-(1-&gt;3)-beta-D-Gal-(1-&gt;4)-[alpha-L-Fuc-(1-&gt;3)]-beta-D-GlcNAc-(1-&gt;3)-beta-D-Gal-(1-&gt;4)-beta-D-GlcNAc + GDP + H(+)</text>
        <dbReference type="Rhea" id="RHEA:62060"/>
        <dbReference type="ChEBI" id="CHEBI:15378"/>
        <dbReference type="ChEBI" id="CHEBI:57273"/>
        <dbReference type="ChEBI" id="CHEBI:58189"/>
        <dbReference type="ChEBI" id="CHEBI:145400"/>
        <dbReference type="ChEBI" id="CHEBI:145401"/>
    </reaction>
    <physiologicalReaction direction="left-to-right" evidence="1">
        <dbReference type="Rhea" id="RHEA:62061"/>
    </physiologicalReaction>
</comment>
<comment type="catalytic activity">
    <reaction evidence="1">
        <text>alpha-Neu5Ac-(2-&gt;3)-beta-D-Gal-(1-&gt;4)-beta-D-GlcNAc-(1-&gt;3)-beta-D-Gal-(1-&gt;4)-beta-D-GlcNAc-(1-&gt;3)-beta-D-Gal-(1-&gt;4)-beta-D-GlcNAc + GDP-beta-L-fucose = alpha-Neu5Ac-(2-&gt;3)-beta-D-Gal-(1-&gt;4)-[alpha-L-Fuc-(1-&gt;3)]-beta-D-GlcNAc-(1-&gt;3)-beta-D-Gal-(1-&gt;4)-beta-D-GlcNAc-(1-&gt;3)-beta-D-Gal-(1-&gt;4)-beta-D-GlcNAc + GDP + H(+)</text>
        <dbReference type="Rhea" id="RHEA:62056"/>
        <dbReference type="ChEBI" id="CHEBI:15378"/>
        <dbReference type="ChEBI" id="CHEBI:57273"/>
        <dbReference type="ChEBI" id="CHEBI:58189"/>
        <dbReference type="ChEBI" id="CHEBI:145398"/>
        <dbReference type="ChEBI" id="CHEBI:145399"/>
    </reaction>
    <physiologicalReaction direction="left-to-right" evidence="1">
        <dbReference type="Rhea" id="RHEA:62057"/>
    </physiologicalReaction>
</comment>
<comment type="activity regulation">
    <text evidence="1">Inhibited by NaCl. Inhibited by GDP in a concentration dependent manner, with an IC(50) value of 93 uM. Also inhibited by GMP and GTP. Inhibited by N-ethylmaleimide. Activated by poly(ethylene glycol) by enhancing the thermal stability of FUT7. Activated by Mn2+, Ca2+, and Mg2+. Both panosialin A and B inhibit activity with IC(50) values of 4.8 and 5.3 ug/ml, respectively. Inhibited by gallic acid (GA) and (-)-epigallocatechin gallate (EGCG) in a time-dependent and irreversible manner with IC(50) values of 60 and 700 nM, respectively.</text>
</comment>
<comment type="pathway">
    <text evidence="5">Protein modification; protein glycosylation.</text>
</comment>
<comment type="subcellular location">
    <subcellularLocation>
        <location>Golgi apparatus</location>
        <location>Golgi stack membrane</location>
        <topology>Single-pass type II membrane protein</topology>
    </subcellularLocation>
    <text>Membrane-bound form in trans cisternae of Golgi.</text>
</comment>
<comment type="alternative products">
    <event type="alternative splicing"/>
    <isoform>
        <id>Q11131-1</id>
        <name>1</name>
        <sequence type="displayed"/>
    </isoform>
    <isoform>
        <id>Q11131-2</id>
        <name>2</name>
        <sequence type="described" ref="VSP_001781"/>
    </isoform>
</comment>
<comment type="tissue specificity">
    <text evidence="9">Highly expressed in lung and bone marrow and to a much lesser extent in spleen, salivary gland and skeletal muscle.</text>
</comment>
<comment type="PTM">
    <text evidence="1">N-glycosylated.</text>
</comment>
<comment type="similarity">
    <text evidence="11">Belongs to the glycosyltransferase 10 family.</text>
</comment>
<comment type="online information" name="Functional Glycomics Gateway - GTase">
    <link uri="http://www.functionalglycomics.org/glycomics/molecule/jsp/glycoEnzyme/viewGlycoEnzyme.jsp?gbpId=gt_mou_614"/>
    <text>Fucosyltransferase 7</text>
</comment>